<protein>
    <recommendedName>
        <fullName evidence="1">Biotin synthase</fullName>
        <ecNumber evidence="1">2.8.1.6</ecNumber>
    </recommendedName>
</protein>
<proteinExistence type="inferred from homology"/>
<accession>A9KG71</accession>
<keyword id="KW-0001">2Fe-2S</keyword>
<keyword id="KW-0004">4Fe-4S</keyword>
<keyword id="KW-0093">Biotin biosynthesis</keyword>
<keyword id="KW-0408">Iron</keyword>
<keyword id="KW-0411">Iron-sulfur</keyword>
<keyword id="KW-0479">Metal-binding</keyword>
<keyword id="KW-0949">S-adenosyl-L-methionine</keyword>
<keyword id="KW-0808">Transferase</keyword>
<gene>
    <name evidence="1" type="primary">bioB</name>
    <name type="ordered locus">CBUD_1040</name>
</gene>
<evidence type="ECO:0000255" key="1">
    <source>
        <dbReference type="HAMAP-Rule" id="MF_01694"/>
    </source>
</evidence>
<evidence type="ECO:0000255" key="2">
    <source>
        <dbReference type="PROSITE-ProRule" id="PRU01266"/>
    </source>
</evidence>
<name>BIOB_COXBN</name>
<comment type="function">
    <text evidence="1">Catalyzes the conversion of dethiobiotin (DTB) to biotin by the insertion of a sulfur atom into dethiobiotin via a radical-based mechanism.</text>
</comment>
<comment type="catalytic activity">
    <reaction evidence="1">
        <text>(4R,5S)-dethiobiotin + (sulfur carrier)-SH + 2 reduced [2Fe-2S]-[ferredoxin] + 2 S-adenosyl-L-methionine = (sulfur carrier)-H + biotin + 2 5'-deoxyadenosine + 2 L-methionine + 2 oxidized [2Fe-2S]-[ferredoxin]</text>
        <dbReference type="Rhea" id="RHEA:22060"/>
        <dbReference type="Rhea" id="RHEA-COMP:10000"/>
        <dbReference type="Rhea" id="RHEA-COMP:10001"/>
        <dbReference type="Rhea" id="RHEA-COMP:14737"/>
        <dbReference type="Rhea" id="RHEA-COMP:14739"/>
        <dbReference type="ChEBI" id="CHEBI:17319"/>
        <dbReference type="ChEBI" id="CHEBI:29917"/>
        <dbReference type="ChEBI" id="CHEBI:33737"/>
        <dbReference type="ChEBI" id="CHEBI:33738"/>
        <dbReference type="ChEBI" id="CHEBI:57586"/>
        <dbReference type="ChEBI" id="CHEBI:57844"/>
        <dbReference type="ChEBI" id="CHEBI:59789"/>
        <dbReference type="ChEBI" id="CHEBI:64428"/>
        <dbReference type="ChEBI" id="CHEBI:149473"/>
        <dbReference type="EC" id="2.8.1.6"/>
    </reaction>
</comment>
<comment type="cofactor">
    <cofactor evidence="1">
        <name>[4Fe-4S] cluster</name>
        <dbReference type="ChEBI" id="CHEBI:49883"/>
    </cofactor>
    <text evidence="1">Binds 1 [4Fe-4S] cluster. The cluster is coordinated with 3 cysteines and an exchangeable S-adenosyl-L-methionine.</text>
</comment>
<comment type="cofactor">
    <cofactor evidence="1">
        <name>[2Fe-2S] cluster</name>
        <dbReference type="ChEBI" id="CHEBI:190135"/>
    </cofactor>
    <text evidence="1">Binds 1 [2Fe-2S] cluster. The cluster is coordinated with 3 cysteines and 1 arginine.</text>
</comment>
<comment type="pathway">
    <text evidence="1">Cofactor biosynthesis; biotin biosynthesis; biotin from 7,8-diaminononanoate: step 2/2.</text>
</comment>
<comment type="subunit">
    <text evidence="1">Homodimer.</text>
</comment>
<comment type="similarity">
    <text evidence="1">Belongs to the radical SAM superfamily. Biotin synthase family.</text>
</comment>
<reference key="1">
    <citation type="journal article" date="2009" name="Infect. Immun.">
        <title>Comparative genomics reveal extensive transposon-mediated genomic plasticity and diversity among potential effector proteins within the genus Coxiella.</title>
        <authorList>
            <person name="Beare P.A."/>
            <person name="Unsworth N."/>
            <person name="Andoh M."/>
            <person name="Voth D.E."/>
            <person name="Omsland A."/>
            <person name="Gilk S.D."/>
            <person name="Williams K.P."/>
            <person name="Sobral B.W."/>
            <person name="Kupko J.J. III"/>
            <person name="Porcella S.F."/>
            <person name="Samuel J.E."/>
            <person name="Heinzen R.A."/>
        </authorList>
    </citation>
    <scope>NUCLEOTIDE SEQUENCE [LARGE SCALE GENOMIC DNA]</scope>
    <source>
        <strain>Dugway 5J108-111</strain>
    </source>
</reference>
<feature type="chain" id="PRO_0000381333" description="Biotin synthase">
    <location>
        <begin position="1"/>
        <end position="321"/>
    </location>
</feature>
<feature type="domain" description="Radical SAM core" evidence="2">
    <location>
        <begin position="37"/>
        <end position="264"/>
    </location>
</feature>
<feature type="binding site" evidence="1">
    <location>
        <position position="52"/>
    </location>
    <ligand>
        <name>[4Fe-4S] cluster</name>
        <dbReference type="ChEBI" id="CHEBI:49883"/>
        <note>4Fe-4S-S-AdoMet</note>
    </ligand>
</feature>
<feature type="binding site" evidence="1">
    <location>
        <position position="56"/>
    </location>
    <ligand>
        <name>[4Fe-4S] cluster</name>
        <dbReference type="ChEBI" id="CHEBI:49883"/>
        <note>4Fe-4S-S-AdoMet</note>
    </ligand>
</feature>
<feature type="binding site" evidence="1">
    <location>
        <position position="59"/>
    </location>
    <ligand>
        <name>[4Fe-4S] cluster</name>
        <dbReference type="ChEBI" id="CHEBI:49883"/>
        <note>4Fe-4S-S-AdoMet</note>
    </ligand>
</feature>
<feature type="binding site" evidence="1">
    <location>
        <position position="96"/>
    </location>
    <ligand>
        <name>[2Fe-2S] cluster</name>
        <dbReference type="ChEBI" id="CHEBI:190135"/>
    </ligand>
</feature>
<feature type="binding site" evidence="1">
    <location>
        <position position="127"/>
    </location>
    <ligand>
        <name>[2Fe-2S] cluster</name>
        <dbReference type="ChEBI" id="CHEBI:190135"/>
    </ligand>
</feature>
<feature type="binding site" evidence="1">
    <location>
        <position position="187"/>
    </location>
    <ligand>
        <name>[2Fe-2S] cluster</name>
        <dbReference type="ChEBI" id="CHEBI:190135"/>
    </ligand>
</feature>
<feature type="binding site" evidence="1">
    <location>
        <position position="259"/>
    </location>
    <ligand>
        <name>[2Fe-2S] cluster</name>
        <dbReference type="ChEBI" id="CHEBI:190135"/>
    </ligand>
</feature>
<sequence length="321" mass="36252">MKGRNWNQASVAKLFELPFFELLYKAYETHRSHFDVRDMELCTLSSIKTGTCPEDCAYCPQSGHYKTDVEREKLINLEAVLEQAKVAKENGARRFCMGAAWRSPPKRELPKVLEMIKSVKALGLETCVTLGMLDQEQALQLKEAGLDFYNHNLDTSPEFYKKIITTRTYQDRMETLKNVRNAGINVCCGGILGMGESRADRIQLLLELYQLPEPPTSIPINQLIPIKGTPLENTKAIDPFEFIKTIAITRLLFPTSVIRLSAGREAMSDELQAWCFMAGANSIFYGDKLLTAKNPGQNRDVNLLKKLGLKVPVLTEEYACY</sequence>
<dbReference type="EC" id="2.8.1.6" evidence="1"/>
<dbReference type="EMBL" id="CP000733">
    <property type="protein sequence ID" value="ABS76895.1"/>
    <property type="molecule type" value="Genomic_DNA"/>
</dbReference>
<dbReference type="RefSeq" id="WP_005768604.1">
    <property type="nucleotide sequence ID" value="NC_009727.1"/>
</dbReference>
<dbReference type="SMR" id="A9KG71"/>
<dbReference type="KEGG" id="cbd:CBUD_1040"/>
<dbReference type="HOGENOM" id="CLU_033172_1_2_6"/>
<dbReference type="UniPathway" id="UPA00078">
    <property type="reaction ID" value="UER00162"/>
</dbReference>
<dbReference type="Proteomes" id="UP000008555">
    <property type="component" value="Chromosome"/>
</dbReference>
<dbReference type="GO" id="GO:0051537">
    <property type="term" value="F:2 iron, 2 sulfur cluster binding"/>
    <property type="evidence" value="ECO:0007669"/>
    <property type="project" value="UniProtKB-KW"/>
</dbReference>
<dbReference type="GO" id="GO:0051539">
    <property type="term" value="F:4 iron, 4 sulfur cluster binding"/>
    <property type="evidence" value="ECO:0007669"/>
    <property type="project" value="UniProtKB-KW"/>
</dbReference>
<dbReference type="GO" id="GO:0004076">
    <property type="term" value="F:biotin synthase activity"/>
    <property type="evidence" value="ECO:0007669"/>
    <property type="project" value="UniProtKB-UniRule"/>
</dbReference>
<dbReference type="GO" id="GO:0005506">
    <property type="term" value="F:iron ion binding"/>
    <property type="evidence" value="ECO:0007669"/>
    <property type="project" value="UniProtKB-UniRule"/>
</dbReference>
<dbReference type="GO" id="GO:0009102">
    <property type="term" value="P:biotin biosynthetic process"/>
    <property type="evidence" value="ECO:0007669"/>
    <property type="project" value="UniProtKB-UniRule"/>
</dbReference>
<dbReference type="CDD" id="cd01335">
    <property type="entry name" value="Radical_SAM"/>
    <property type="match status" value="1"/>
</dbReference>
<dbReference type="FunFam" id="3.20.20.70:FF:000011">
    <property type="entry name" value="Biotin synthase"/>
    <property type="match status" value="1"/>
</dbReference>
<dbReference type="Gene3D" id="3.20.20.70">
    <property type="entry name" value="Aldolase class I"/>
    <property type="match status" value="1"/>
</dbReference>
<dbReference type="HAMAP" id="MF_01694">
    <property type="entry name" value="BioB"/>
    <property type="match status" value="1"/>
</dbReference>
<dbReference type="InterPro" id="IPR013785">
    <property type="entry name" value="Aldolase_TIM"/>
</dbReference>
<dbReference type="InterPro" id="IPR010722">
    <property type="entry name" value="BATS_dom"/>
</dbReference>
<dbReference type="InterPro" id="IPR002684">
    <property type="entry name" value="Biotin_synth/BioAB"/>
</dbReference>
<dbReference type="InterPro" id="IPR024177">
    <property type="entry name" value="Biotin_synthase"/>
</dbReference>
<dbReference type="InterPro" id="IPR006638">
    <property type="entry name" value="Elp3/MiaA/NifB-like_rSAM"/>
</dbReference>
<dbReference type="InterPro" id="IPR007197">
    <property type="entry name" value="rSAM"/>
</dbReference>
<dbReference type="NCBIfam" id="TIGR00433">
    <property type="entry name" value="bioB"/>
    <property type="match status" value="1"/>
</dbReference>
<dbReference type="PANTHER" id="PTHR22976">
    <property type="entry name" value="BIOTIN SYNTHASE"/>
    <property type="match status" value="1"/>
</dbReference>
<dbReference type="PANTHER" id="PTHR22976:SF2">
    <property type="entry name" value="BIOTIN SYNTHASE, MITOCHONDRIAL"/>
    <property type="match status" value="1"/>
</dbReference>
<dbReference type="Pfam" id="PF06968">
    <property type="entry name" value="BATS"/>
    <property type="match status" value="1"/>
</dbReference>
<dbReference type="Pfam" id="PF04055">
    <property type="entry name" value="Radical_SAM"/>
    <property type="match status" value="1"/>
</dbReference>
<dbReference type="PIRSF" id="PIRSF001619">
    <property type="entry name" value="Biotin_synth"/>
    <property type="match status" value="1"/>
</dbReference>
<dbReference type="SFLD" id="SFLDG01060">
    <property type="entry name" value="BATS_domain_containing"/>
    <property type="match status" value="1"/>
</dbReference>
<dbReference type="SFLD" id="SFLDF00272">
    <property type="entry name" value="biotin_synthase"/>
    <property type="match status" value="1"/>
</dbReference>
<dbReference type="SMART" id="SM00876">
    <property type="entry name" value="BATS"/>
    <property type="match status" value="1"/>
</dbReference>
<dbReference type="SMART" id="SM00729">
    <property type="entry name" value="Elp3"/>
    <property type="match status" value="1"/>
</dbReference>
<dbReference type="SUPFAM" id="SSF102114">
    <property type="entry name" value="Radical SAM enzymes"/>
    <property type="match status" value="1"/>
</dbReference>
<dbReference type="PROSITE" id="PS51918">
    <property type="entry name" value="RADICAL_SAM"/>
    <property type="match status" value="1"/>
</dbReference>
<organism>
    <name type="scientific">Coxiella burnetii (strain Dugway 5J108-111)</name>
    <dbReference type="NCBI Taxonomy" id="434922"/>
    <lineage>
        <taxon>Bacteria</taxon>
        <taxon>Pseudomonadati</taxon>
        <taxon>Pseudomonadota</taxon>
        <taxon>Gammaproteobacteria</taxon>
        <taxon>Legionellales</taxon>
        <taxon>Coxiellaceae</taxon>
        <taxon>Coxiella</taxon>
    </lineage>
</organism>